<gene>
    <name evidence="1" type="primary">amzA</name>
    <name type="ordered locus">M1425_1451</name>
</gene>
<reference key="1">
    <citation type="journal article" date="2009" name="Proc. Natl. Acad. Sci. U.S.A.">
        <title>Biogeography of the Sulfolobus islandicus pan-genome.</title>
        <authorList>
            <person name="Reno M.L."/>
            <person name="Held N.L."/>
            <person name="Fields C.J."/>
            <person name="Burke P.V."/>
            <person name="Whitaker R.J."/>
        </authorList>
    </citation>
    <scope>NUCLEOTIDE SEQUENCE [LARGE SCALE GENOMIC DNA]</scope>
    <source>
        <strain>M.14.25 / Kamchatka #1</strain>
    </source>
</reference>
<dbReference type="EC" id="3.4.-.-" evidence="1"/>
<dbReference type="EMBL" id="CP001400">
    <property type="protein sequence ID" value="ACP38204.1"/>
    <property type="molecule type" value="Genomic_DNA"/>
</dbReference>
<dbReference type="RefSeq" id="WP_012711449.1">
    <property type="nucleotide sequence ID" value="NC_012588.1"/>
</dbReference>
<dbReference type="SMR" id="C3MVY2"/>
<dbReference type="KEGG" id="sia:M1425_1451"/>
<dbReference type="HOGENOM" id="CLU_108521_2_0_2"/>
<dbReference type="Proteomes" id="UP000001350">
    <property type="component" value="Chromosome"/>
</dbReference>
<dbReference type="GO" id="GO:0008237">
    <property type="term" value="F:metallopeptidase activity"/>
    <property type="evidence" value="ECO:0007669"/>
    <property type="project" value="UniProtKB-UniRule"/>
</dbReference>
<dbReference type="GO" id="GO:0008270">
    <property type="term" value="F:zinc ion binding"/>
    <property type="evidence" value="ECO:0007669"/>
    <property type="project" value="UniProtKB-UniRule"/>
</dbReference>
<dbReference type="GO" id="GO:0006508">
    <property type="term" value="P:proteolysis"/>
    <property type="evidence" value="ECO:0007669"/>
    <property type="project" value="UniProtKB-UniRule"/>
</dbReference>
<dbReference type="CDD" id="cd11375">
    <property type="entry name" value="Peptidase_M54"/>
    <property type="match status" value="1"/>
</dbReference>
<dbReference type="Gene3D" id="3.40.390.10">
    <property type="entry name" value="Collagenase (Catalytic Domain)"/>
    <property type="match status" value="1"/>
</dbReference>
<dbReference type="HAMAP" id="MF_01842">
    <property type="entry name" value="Archaemetzincin"/>
    <property type="match status" value="1"/>
</dbReference>
<dbReference type="InterPro" id="IPR024079">
    <property type="entry name" value="MetalloPept_cat_dom_sf"/>
</dbReference>
<dbReference type="InterPro" id="IPR012962">
    <property type="entry name" value="Pept_M54_archaemetzincn"/>
</dbReference>
<dbReference type="InterPro" id="IPR012091">
    <property type="entry name" value="Pept_M54_archaemetzncn_arc/bac"/>
</dbReference>
<dbReference type="NCBIfam" id="NF033823">
    <property type="entry name" value="archmetzin"/>
    <property type="match status" value="1"/>
</dbReference>
<dbReference type="PANTHER" id="PTHR15910">
    <property type="entry name" value="ARCHAEMETZINCIN"/>
    <property type="match status" value="1"/>
</dbReference>
<dbReference type="PANTHER" id="PTHR15910:SF1">
    <property type="entry name" value="ARCHAEMETZINCIN-2"/>
    <property type="match status" value="1"/>
</dbReference>
<dbReference type="Pfam" id="PF07998">
    <property type="entry name" value="Peptidase_M54"/>
    <property type="match status" value="1"/>
</dbReference>
<dbReference type="PIRSF" id="PIRSF005785">
    <property type="entry name" value="Zn-prot_arch"/>
    <property type="match status" value="1"/>
</dbReference>
<dbReference type="SUPFAM" id="SSF55486">
    <property type="entry name" value="Metalloproteases ('zincins'), catalytic domain"/>
    <property type="match status" value="1"/>
</dbReference>
<protein>
    <recommendedName>
        <fullName evidence="1">Archaemetzincin</fullName>
        <ecNumber evidence="1">3.4.-.-</ecNumber>
    </recommendedName>
</protein>
<evidence type="ECO:0000255" key="1">
    <source>
        <dbReference type="HAMAP-Rule" id="MF_01842"/>
    </source>
</evidence>
<accession>C3MVY2</accession>
<sequence>MTEMKILIVTLTYIEKSIIDEIVNNLSSYGLEVDILFDSRKYLPISAFNWERLQYDAEKVLSFLKSKYDFNYDSIIFLADSDGYIDGYNFVFGLTIDNFAIIFLNRLREEFYNRKPDLELFMKRVVKEVTHEAGHTLGLGHCNTIGCVMNFSNTVEDVDKKQARFCKNCIYKIENLSKYLQRK</sequence>
<comment type="function">
    <text evidence="1">Probable zinc metalloprotease whose natural substrate is unknown.</text>
</comment>
<comment type="cofactor">
    <cofactor evidence="1">
        <name>Zn(2+)</name>
        <dbReference type="ChEBI" id="CHEBI:29105"/>
    </cofactor>
    <text evidence="1">Binds 2 Zn(2+) ions per subunit. One is catalytic, whereas the other seems to have a structural role.</text>
</comment>
<comment type="subunit">
    <text evidence="1">Monomer.</text>
</comment>
<comment type="similarity">
    <text evidence="1">Belongs to the peptidase M54 family.</text>
</comment>
<organism>
    <name type="scientific">Saccharolobus islandicus (strain M.14.25 / Kamchatka #1)</name>
    <name type="common">Sulfolobus islandicus</name>
    <dbReference type="NCBI Taxonomy" id="427317"/>
    <lineage>
        <taxon>Archaea</taxon>
        <taxon>Thermoproteota</taxon>
        <taxon>Thermoprotei</taxon>
        <taxon>Sulfolobales</taxon>
        <taxon>Sulfolobaceae</taxon>
        <taxon>Saccharolobus</taxon>
    </lineage>
</organism>
<keyword id="KW-0378">Hydrolase</keyword>
<keyword id="KW-0479">Metal-binding</keyword>
<keyword id="KW-0482">Metalloprotease</keyword>
<keyword id="KW-0645">Protease</keyword>
<keyword id="KW-0862">Zinc</keyword>
<proteinExistence type="inferred from homology"/>
<name>AMZA_SACI4</name>
<feature type="chain" id="PRO_1000216099" description="Archaemetzincin">
    <location>
        <begin position="1"/>
        <end position="183"/>
    </location>
</feature>
<feature type="active site" description="Proton acceptor" evidence="1">
    <location>
        <position position="132"/>
    </location>
</feature>
<feature type="binding site" evidence="1">
    <location>
        <position position="131"/>
    </location>
    <ligand>
        <name>Zn(2+)</name>
        <dbReference type="ChEBI" id="CHEBI:29105"/>
        <label>1</label>
        <note>catalytic</note>
    </ligand>
</feature>
<feature type="binding site" evidence="1">
    <location>
        <position position="135"/>
    </location>
    <ligand>
        <name>Zn(2+)</name>
        <dbReference type="ChEBI" id="CHEBI:29105"/>
        <label>1</label>
        <note>catalytic</note>
    </ligand>
</feature>
<feature type="binding site" evidence="1">
    <location>
        <position position="141"/>
    </location>
    <ligand>
        <name>Zn(2+)</name>
        <dbReference type="ChEBI" id="CHEBI:29105"/>
        <label>1</label>
        <note>catalytic</note>
    </ligand>
</feature>
<feature type="binding site" evidence="1">
    <location>
        <position position="142"/>
    </location>
    <ligand>
        <name>Zn(2+)</name>
        <dbReference type="ChEBI" id="CHEBI:29105"/>
        <label>2</label>
    </ligand>
</feature>
<feature type="binding site" evidence="1">
    <location>
        <position position="147"/>
    </location>
    <ligand>
        <name>Zn(2+)</name>
        <dbReference type="ChEBI" id="CHEBI:29105"/>
        <label>2</label>
    </ligand>
</feature>
<feature type="binding site" evidence="1">
    <location>
        <position position="166"/>
    </location>
    <ligand>
        <name>Zn(2+)</name>
        <dbReference type="ChEBI" id="CHEBI:29105"/>
        <label>2</label>
    </ligand>
</feature>
<feature type="binding site" evidence="1">
    <location>
        <position position="169"/>
    </location>
    <ligand>
        <name>Zn(2+)</name>
        <dbReference type="ChEBI" id="CHEBI:29105"/>
        <label>2</label>
    </ligand>
</feature>